<evidence type="ECO:0000250" key="1"/>
<evidence type="ECO:0000250" key="2">
    <source>
        <dbReference type="UniProtKB" id="P07867"/>
    </source>
</evidence>
<evidence type="ECO:0000250" key="3">
    <source>
        <dbReference type="UniProtKB" id="P11150"/>
    </source>
</evidence>
<evidence type="ECO:0000255" key="4"/>
<evidence type="ECO:0000255" key="5">
    <source>
        <dbReference type="PROSITE-ProRule" id="PRU00152"/>
    </source>
</evidence>
<evidence type="ECO:0000255" key="6">
    <source>
        <dbReference type="PROSITE-ProRule" id="PRU10037"/>
    </source>
</evidence>
<evidence type="ECO:0000256" key="7">
    <source>
        <dbReference type="SAM" id="MobiDB-lite"/>
    </source>
</evidence>
<evidence type="ECO:0000305" key="8"/>
<accession>Q3SZ79</accession>
<reference key="1">
    <citation type="submission" date="2005-08" db="EMBL/GenBank/DDBJ databases">
        <authorList>
            <consortium name="NIH - Mammalian Gene Collection (MGC) project"/>
        </authorList>
    </citation>
    <scope>NUCLEOTIDE SEQUENCE [LARGE SCALE MRNA]</scope>
    <source>
        <strain>Hereford</strain>
        <tissue>Fetal liver</tissue>
    </source>
</reference>
<organism>
    <name type="scientific">Bos taurus</name>
    <name type="common">Bovine</name>
    <dbReference type="NCBI Taxonomy" id="9913"/>
    <lineage>
        <taxon>Eukaryota</taxon>
        <taxon>Metazoa</taxon>
        <taxon>Chordata</taxon>
        <taxon>Craniata</taxon>
        <taxon>Vertebrata</taxon>
        <taxon>Euteleostomi</taxon>
        <taxon>Mammalia</taxon>
        <taxon>Eutheria</taxon>
        <taxon>Laurasiatheria</taxon>
        <taxon>Artiodactyla</taxon>
        <taxon>Ruminantia</taxon>
        <taxon>Pecora</taxon>
        <taxon>Bovidae</taxon>
        <taxon>Bovinae</taxon>
        <taxon>Bos</taxon>
    </lineage>
</organism>
<feature type="signal peptide" evidence="3">
    <location>
        <begin position="1"/>
        <end position="21"/>
    </location>
</feature>
<feature type="chain" id="PRO_0000246183" description="Hepatic triacylglycerol lipase">
    <location>
        <begin position="22"/>
        <end position="500"/>
    </location>
</feature>
<feature type="domain" description="PLAT" evidence="5">
    <location>
        <begin position="353"/>
        <end position="487"/>
    </location>
</feature>
<feature type="region of interest" description="Disordered" evidence="7">
    <location>
        <begin position="23"/>
        <end position="44"/>
    </location>
</feature>
<feature type="region of interest" description="Essential for determining substrate specificity" evidence="3">
    <location>
        <begin position="254"/>
        <end position="277"/>
    </location>
</feature>
<feature type="active site" description="Nucleophile" evidence="1">
    <location>
        <position position="168"/>
    </location>
</feature>
<feature type="active site" description="Charge relay system" evidence="6">
    <location>
        <position position="194"/>
    </location>
</feature>
<feature type="active site" description="Charge relay system" evidence="6">
    <location>
        <position position="279"/>
    </location>
</feature>
<feature type="glycosylation site" description="N-linked (GlcNAc...) asparagine" evidence="4">
    <location>
        <position position="67"/>
    </location>
</feature>
<feature type="glycosylation site" description="N-linked (GlcNAc...) asparagine" evidence="4">
    <location>
        <position position="78"/>
    </location>
</feature>
<feature type="glycosylation site" description="N-linked (GlcNAc...) asparagine" evidence="4">
    <location>
        <position position="363"/>
    </location>
</feature>
<feature type="glycosylation site" description="N-linked (GlcNAc...) asparagine" evidence="4">
    <location>
        <position position="398"/>
    </location>
</feature>
<keyword id="KW-0325">Glycoprotein</keyword>
<keyword id="KW-0345">HDL</keyword>
<keyword id="KW-0358">Heparin-binding</keyword>
<keyword id="KW-0378">Hydrolase</keyword>
<keyword id="KW-0442">Lipid degradation</keyword>
<keyword id="KW-0443">Lipid metabolism</keyword>
<keyword id="KW-1185">Reference proteome</keyword>
<keyword id="KW-0964">Secreted</keyword>
<keyword id="KW-0732">Signal</keyword>
<protein>
    <recommendedName>
        <fullName>Hepatic triacylglycerol lipase</fullName>
        <shortName>HL</shortName>
        <shortName>Hepatic lipase</shortName>
        <ecNumber evidence="2">3.1.1.3</ecNumber>
    </recommendedName>
    <alternativeName>
        <fullName>Lipase member C</fullName>
    </alternativeName>
    <alternativeName>
        <fullName>Lysophospholipase</fullName>
        <ecNumber evidence="2">3.1.1.5</ecNumber>
    </alternativeName>
    <alternativeName>
        <fullName>Phospholipase A1</fullName>
        <ecNumber evidence="2">3.1.1.32</ecNumber>
    </alternativeName>
</protein>
<sequence length="500" mass="56826">MENPLCVSIFLFYCILIQSSAHGQSLGPESFGRRSRAAETNKTPQETRTKFLLFRGETDKGCQILLNHSDTLQQCGFNSSLPLVMIVHGWLVDDILEDWVWEMVAALKSQLAQSVNVGLAEWVTLAHNHYTTAVRNTRLVGQEIAALLQWLQESVQFSPSHVHLIGYSLGAHVSGFAGSYMSRKHKIGRITGLDAAGPLFEKASLSDRLSPDDANFVDAIHTFTWEHMGLSVGMKQPIAHYDFYPNGGSYQPGCHFLELYKHFAKHGLNAITRTVKCAHERSVHLFIDSLLHADMQSMAYLCRDMDRFSQGLCLSCKKGRCNTLGYHTRQERQSKKSKSLFLVTRAQSPFKVYHYQFKIRFINQTENPVEPTFTVSFLGTRGERQKIPITLSKGITSNETYSFLITLDVDIGELIMIKFKWENRMVWSNVWNTVQTIIPWGRGSLHSGLALKSIRVKVGETQQRMTFCSENMNDLLLHPAREKTFVRCEANSETLKRKIR</sequence>
<name>LIPC_BOVIN</name>
<gene>
    <name type="primary">LIPC</name>
</gene>
<proteinExistence type="evidence at transcript level"/>
<comment type="function">
    <text evidence="2 3">Catalyzes the hydrolysis of triglycerides and phospholipids present in circulating plasma lipoproteins, including chylomicrons, intermediate density lipoproteins (IDL), low density lipoproteins (LDL) of large size and high density lipoproteins (HDL), releasing free fatty acids (FFA) and smaller lipoprotein particles (By similarity). Also exhibits lysophospholipase activity (By similarity). Can hydrolyze both neutral lipid and phospholipid substrates but shows a greater binding affinity for neutral lipid substrates than phospholipid substrates (By similarity). In native LDL, preferentially hydrolyzes the phosphatidylcholine species containing polyunsaturated fatty acids at sn-2 position (By similarity).</text>
</comment>
<comment type="catalytic activity">
    <reaction evidence="2">
        <text>a triacylglycerol + H2O = a diacylglycerol + a fatty acid + H(+)</text>
        <dbReference type="Rhea" id="RHEA:12044"/>
        <dbReference type="ChEBI" id="CHEBI:15377"/>
        <dbReference type="ChEBI" id="CHEBI:15378"/>
        <dbReference type="ChEBI" id="CHEBI:17855"/>
        <dbReference type="ChEBI" id="CHEBI:18035"/>
        <dbReference type="ChEBI" id="CHEBI:28868"/>
        <dbReference type="EC" id="3.1.1.3"/>
    </reaction>
</comment>
<comment type="catalytic activity">
    <reaction evidence="2">
        <text>a 1-acyl-sn-glycero-3-phosphocholine + H2O = sn-glycerol 3-phosphocholine + a fatty acid + H(+)</text>
        <dbReference type="Rhea" id="RHEA:15177"/>
        <dbReference type="ChEBI" id="CHEBI:15377"/>
        <dbReference type="ChEBI" id="CHEBI:15378"/>
        <dbReference type="ChEBI" id="CHEBI:16870"/>
        <dbReference type="ChEBI" id="CHEBI:28868"/>
        <dbReference type="ChEBI" id="CHEBI:58168"/>
        <dbReference type="EC" id="3.1.1.5"/>
    </reaction>
</comment>
<comment type="catalytic activity">
    <reaction evidence="2">
        <text>a 1,2-diacyl-sn-glycero-3-phosphocholine + H2O = a 2-acyl-sn-glycero-3-phosphocholine + a fatty acid + H(+)</text>
        <dbReference type="Rhea" id="RHEA:18689"/>
        <dbReference type="ChEBI" id="CHEBI:15377"/>
        <dbReference type="ChEBI" id="CHEBI:15378"/>
        <dbReference type="ChEBI" id="CHEBI:28868"/>
        <dbReference type="ChEBI" id="CHEBI:57643"/>
        <dbReference type="ChEBI" id="CHEBI:57875"/>
        <dbReference type="EC" id="3.1.1.32"/>
    </reaction>
</comment>
<comment type="catalytic activity">
    <reaction evidence="3">
        <text>1,2,3-tri-(9Z-octadecenoyl)-glycerol + H2O = di-(9Z)-octadecenoylglycerol + (9Z)-octadecenoate + H(+)</text>
        <dbReference type="Rhea" id="RHEA:38575"/>
        <dbReference type="ChEBI" id="CHEBI:15377"/>
        <dbReference type="ChEBI" id="CHEBI:15378"/>
        <dbReference type="ChEBI" id="CHEBI:30823"/>
        <dbReference type="ChEBI" id="CHEBI:53753"/>
        <dbReference type="ChEBI" id="CHEBI:75945"/>
    </reaction>
    <physiologicalReaction direction="left-to-right" evidence="3">
        <dbReference type="Rhea" id="RHEA:38576"/>
    </physiologicalReaction>
</comment>
<comment type="catalytic activity">
    <reaction evidence="3">
        <text>1,2-di-(9Z-octadecenoyl)-sn-glycero-3-phosphocholine + H2O = (9Z-octadecenoyl)-sn-glycero-3-phosphocholine + (9Z)-octadecenoate + H(+)</text>
        <dbReference type="Rhea" id="RHEA:38699"/>
        <dbReference type="ChEBI" id="CHEBI:15377"/>
        <dbReference type="ChEBI" id="CHEBI:15378"/>
        <dbReference type="ChEBI" id="CHEBI:30823"/>
        <dbReference type="ChEBI" id="CHEBI:74669"/>
        <dbReference type="ChEBI" id="CHEBI:76083"/>
    </reaction>
    <physiologicalReaction direction="left-to-right" evidence="3">
        <dbReference type="Rhea" id="RHEA:38700"/>
    </physiologicalReaction>
</comment>
<comment type="catalytic activity">
    <reaction evidence="3">
        <text>1,2,3-tributanoylglycerol + H2O = dibutanoylglycerol + butanoate + H(+)</text>
        <dbReference type="Rhea" id="RHEA:40475"/>
        <dbReference type="ChEBI" id="CHEBI:15377"/>
        <dbReference type="ChEBI" id="CHEBI:15378"/>
        <dbReference type="ChEBI" id="CHEBI:17968"/>
        <dbReference type="ChEBI" id="CHEBI:35020"/>
        <dbReference type="ChEBI" id="CHEBI:76478"/>
    </reaction>
    <physiologicalReaction direction="left-to-right" evidence="3">
        <dbReference type="Rhea" id="RHEA:40476"/>
    </physiologicalReaction>
</comment>
<comment type="catalytic activity">
    <reaction evidence="3">
        <text>1,2-dihexadecanoyl-sn-glycero-3-phosphocholine + H2O = hexadecanoyl-sn-glycero-3-phosphocholine + hexadecanoate + H(+)</text>
        <dbReference type="Rhea" id="RHEA:41384"/>
        <dbReference type="ChEBI" id="CHEBI:7896"/>
        <dbReference type="ChEBI" id="CHEBI:15377"/>
        <dbReference type="ChEBI" id="CHEBI:15378"/>
        <dbReference type="ChEBI" id="CHEBI:64563"/>
        <dbReference type="ChEBI" id="CHEBI:72999"/>
    </reaction>
    <physiologicalReaction direction="left-to-right" evidence="3">
        <dbReference type="Rhea" id="RHEA:41385"/>
    </physiologicalReaction>
</comment>
<comment type="catalytic activity">
    <reaction evidence="2">
        <text>1,2-di-(9Z-octadecenoyl)-sn-glycerol + H2O = 2-(9Z-octadecenoyl)-glycerol + (9Z)-octadecenoate + H(+)</text>
        <dbReference type="Rhea" id="RHEA:38511"/>
        <dbReference type="ChEBI" id="CHEBI:15377"/>
        <dbReference type="ChEBI" id="CHEBI:15378"/>
        <dbReference type="ChEBI" id="CHEBI:30823"/>
        <dbReference type="ChEBI" id="CHEBI:52333"/>
        <dbReference type="ChEBI" id="CHEBI:73990"/>
    </reaction>
    <physiologicalReaction direction="left-to-right" evidence="2">
        <dbReference type="Rhea" id="RHEA:38512"/>
    </physiologicalReaction>
</comment>
<comment type="catalytic activity">
    <reaction evidence="2">
        <text>1,2,3-tri-(9Z-octadecenoyl)-glycerol + H2O = 2,3-di-(9Z)-octadecenoyl-sn-glycerol + (9Z)-octadecenoate + H(+)</text>
        <dbReference type="Rhea" id="RHEA:38391"/>
        <dbReference type="ChEBI" id="CHEBI:15377"/>
        <dbReference type="ChEBI" id="CHEBI:15378"/>
        <dbReference type="ChEBI" id="CHEBI:30823"/>
        <dbReference type="ChEBI" id="CHEBI:53753"/>
        <dbReference type="ChEBI" id="CHEBI:75824"/>
    </reaction>
    <physiologicalReaction direction="left-to-right" evidence="2">
        <dbReference type="Rhea" id="RHEA:38392"/>
    </physiologicalReaction>
</comment>
<comment type="catalytic activity">
    <reaction evidence="2">
        <text>1-(9Z-octadecenoyl)-sn-glycero-3-phospho-L-serine + H2O = sn-glycero-3-phospho-L-serine + (9Z)-octadecenoate + H(+)</text>
        <dbReference type="Rhea" id="RHEA:40499"/>
        <dbReference type="ChEBI" id="CHEBI:15377"/>
        <dbReference type="ChEBI" id="CHEBI:15378"/>
        <dbReference type="ChEBI" id="CHEBI:30823"/>
        <dbReference type="ChEBI" id="CHEBI:64765"/>
        <dbReference type="ChEBI" id="CHEBI:74617"/>
    </reaction>
    <physiologicalReaction direction="left-to-right" evidence="2">
        <dbReference type="Rhea" id="RHEA:40500"/>
    </physiologicalReaction>
</comment>
<comment type="catalytic activity">
    <reaction evidence="2">
        <text>1-hexadecanoyl-sn-glycero-3-phosphocholine + H2O = sn-glycerol 3-phosphocholine + hexadecanoate + H(+)</text>
        <dbReference type="Rhea" id="RHEA:40435"/>
        <dbReference type="ChEBI" id="CHEBI:7896"/>
        <dbReference type="ChEBI" id="CHEBI:15377"/>
        <dbReference type="ChEBI" id="CHEBI:15378"/>
        <dbReference type="ChEBI" id="CHEBI:16870"/>
        <dbReference type="ChEBI" id="CHEBI:72998"/>
    </reaction>
    <physiologicalReaction direction="left-to-right" evidence="2">
        <dbReference type="Rhea" id="RHEA:40436"/>
    </physiologicalReaction>
</comment>
<comment type="catalytic activity">
    <reaction evidence="2">
        <text>1,3-di-(9Z-octadecenoyl)-glycerol + H2O = 3-(9Z-octadecenoyl)-sn-glycerol + (9Z)-octadecenoate + H(+)</text>
        <dbReference type="Rhea" id="RHEA:38651"/>
        <dbReference type="ChEBI" id="CHEBI:15377"/>
        <dbReference type="ChEBI" id="CHEBI:15378"/>
        <dbReference type="ChEBI" id="CHEBI:30823"/>
        <dbReference type="ChEBI" id="CHEBI:75735"/>
        <dbReference type="ChEBI" id="CHEBI:75938"/>
    </reaction>
    <physiologicalReaction direction="left-to-right" evidence="2">
        <dbReference type="Rhea" id="RHEA:38652"/>
    </physiologicalReaction>
</comment>
<comment type="subunit">
    <text evidence="3">Homodimer.</text>
</comment>
<comment type="subcellular location">
    <subcellularLocation>
        <location evidence="3">Secreted</location>
    </subcellularLocation>
</comment>
<comment type="similarity">
    <text evidence="8">Belongs to the AB hydrolase superfamily. Lipase family.</text>
</comment>
<dbReference type="EC" id="3.1.1.3" evidence="2"/>
<dbReference type="EC" id="3.1.1.5" evidence="2"/>
<dbReference type="EC" id="3.1.1.32" evidence="2"/>
<dbReference type="EMBL" id="BC103072">
    <property type="protein sequence ID" value="AAI03073.1"/>
    <property type="molecule type" value="mRNA"/>
</dbReference>
<dbReference type="RefSeq" id="NP_001030487.1">
    <property type="nucleotide sequence ID" value="NM_001035410.2"/>
</dbReference>
<dbReference type="SMR" id="Q3SZ79"/>
<dbReference type="FunCoup" id="Q3SZ79">
    <property type="interactions" value="164"/>
</dbReference>
<dbReference type="STRING" id="9913.ENSBTAP00000007206"/>
<dbReference type="ESTHER" id="bovin-q3sz79">
    <property type="family name" value="Hepatic_Lipase"/>
</dbReference>
<dbReference type="GlyCosmos" id="Q3SZ79">
    <property type="glycosylation" value="4 sites, No reported glycans"/>
</dbReference>
<dbReference type="GlyGen" id="Q3SZ79">
    <property type="glycosylation" value="4 sites"/>
</dbReference>
<dbReference type="Ensembl" id="ENSBTAT00000007206.7">
    <property type="protein sequence ID" value="ENSBTAP00000007206.6"/>
    <property type="gene ID" value="ENSBTAG00000005479.7"/>
</dbReference>
<dbReference type="GeneID" id="535192"/>
<dbReference type="KEGG" id="bta:535192"/>
<dbReference type="CTD" id="3990"/>
<dbReference type="VEuPathDB" id="HostDB:ENSBTAG00000005479"/>
<dbReference type="VGNC" id="VGNC:58357">
    <property type="gene designation" value="LIPC"/>
</dbReference>
<dbReference type="GeneTree" id="ENSGT00940000157602"/>
<dbReference type="InParanoid" id="Q3SZ79"/>
<dbReference type="OMA" id="FVRCKED"/>
<dbReference type="OrthoDB" id="199913at2759"/>
<dbReference type="Reactome" id="R-BTA-8963889">
    <property type="pathway name" value="Assembly of active LPL and LIPC lipase complexes"/>
</dbReference>
<dbReference type="Reactome" id="R-BTA-8964026">
    <property type="pathway name" value="Chylomicron clearance"/>
</dbReference>
<dbReference type="Proteomes" id="UP000009136">
    <property type="component" value="Chromosome 10"/>
</dbReference>
<dbReference type="Bgee" id="ENSBTAG00000005479">
    <property type="expression patterns" value="Expressed in liver and 50 other cell types or tissues"/>
</dbReference>
<dbReference type="GO" id="GO:0005615">
    <property type="term" value="C:extracellular space"/>
    <property type="evidence" value="ECO:0000318"/>
    <property type="project" value="GO_Central"/>
</dbReference>
<dbReference type="GO" id="GO:0034364">
    <property type="term" value="C:high-density lipoprotein particle"/>
    <property type="evidence" value="ECO:0007669"/>
    <property type="project" value="UniProtKB-KW"/>
</dbReference>
<dbReference type="GO" id="GO:0034185">
    <property type="term" value="F:apolipoprotein binding"/>
    <property type="evidence" value="ECO:0000318"/>
    <property type="project" value="GO_Central"/>
</dbReference>
<dbReference type="GO" id="GO:0008201">
    <property type="term" value="F:heparin binding"/>
    <property type="evidence" value="ECO:0007669"/>
    <property type="project" value="UniProtKB-KW"/>
</dbReference>
<dbReference type="GO" id="GO:0004465">
    <property type="term" value="F:lipoprotein lipase activity"/>
    <property type="evidence" value="ECO:0000318"/>
    <property type="project" value="GO_Central"/>
</dbReference>
<dbReference type="GO" id="GO:0004622">
    <property type="term" value="F:lysophospholipase activity"/>
    <property type="evidence" value="ECO:0007669"/>
    <property type="project" value="UniProtKB-EC"/>
</dbReference>
<dbReference type="GO" id="GO:0008970">
    <property type="term" value="F:phospholipase A1 activity"/>
    <property type="evidence" value="ECO:0000250"/>
    <property type="project" value="UniProtKB"/>
</dbReference>
<dbReference type="GO" id="GO:0004806">
    <property type="term" value="F:triacylglycerol lipase activity"/>
    <property type="evidence" value="ECO:0000250"/>
    <property type="project" value="UniProtKB"/>
</dbReference>
<dbReference type="GO" id="GO:0042632">
    <property type="term" value="P:cholesterol homeostasis"/>
    <property type="evidence" value="ECO:0000318"/>
    <property type="project" value="GO_Central"/>
</dbReference>
<dbReference type="GO" id="GO:0008203">
    <property type="term" value="P:cholesterol metabolic process"/>
    <property type="evidence" value="ECO:0007669"/>
    <property type="project" value="Ensembl"/>
</dbReference>
<dbReference type="GO" id="GO:0030301">
    <property type="term" value="P:cholesterol transport"/>
    <property type="evidence" value="ECO:0007669"/>
    <property type="project" value="Ensembl"/>
</dbReference>
<dbReference type="GO" id="GO:0006633">
    <property type="term" value="P:fatty acid biosynthetic process"/>
    <property type="evidence" value="ECO:0000318"/>
    <property type="project" value="GO_Central"/>
</dbReference>
<dbReference type="GO" id="GO:0034375">
    <property type="term" value="P:high-density lipoprotein particle remodeling"/>
    <property type="evidence" value="ECO:0000318"/>
    <property type="project" value="GO_Central"/>
</dbReference>
<dbReference type="GO" id="GO:0034374">
    <property type="term" value="P:low-density lipoprotein particle remodeling"/>
    <property type="evidence" value="ECO:0007669"/>
    <property type="project" value="Ensembl"/>
</dbReference>
<dbReference type="GO" id="GO:0019433">
    <property type="term" value="P:triglyceride catabolic process"/>
    <property type="evidence" value="ECO:0000318"/>
    <property type="project" value="GO_Central"/>
</dbReference>
<dbReference type="GO" id="GO:0070328">
    <property type="term" value="P:triglyceride homeostasis"/>
    <property type="evidence" value="ECO:0007669"/>
    <property type="project" value="Ensembl"/>
</dbReference>
<dbReference type="GO" id="GO:0034372">
    <property type="term" value="P:very-low-density lipoprotein particle remodeling"/>
    <property type="evidence" value="ECO:0007669"/>
    <property type="project" value="Ensembl"/>
</dbReference>
<dbReference type="CDD" id="cd00707">
    <property type="entry name" value="Pancreat_lipase_like"/>
    <property type="match status" value="1"/>
</dbReference>
<dbReference type="CDD" id="cd01758">
    <property type="entry name" value="PLAT_LPL"/>
    <property type="match status" value="1"/>
</dbReference>
<dbReference type="FunFam" id="3.40.50.1820:FF:000101">
    <property type="entry name" value="Hepatic triacylglycerol lipase"/>
    <property type="match status" value="1"/>
</dbReference>
<dbReference type="FunFam" id="2.60.60.20:FF:000010">
    <property type="entry name" value="hepatic triacylglycerol lipase"/>
    <property type="match status" value="1"/>
</dbReference>
<dbReference type="Gene3D" id="3.40.50.1820">
    <property type="entry name" value="alpha/beta hydrolase"/>
    <property type="match status" value="1"/>
</dbReference>
<dbReference type="Gene3D" id="2.60.60.20">
    <property type="entry name" value="PLAT/LH2 domain"/>
    <property type="match status" value="1"/>
</dbReference>
<dbReference type="InterPro" id="IPR029058">
    <property type="entry name" value="AB_hydrolase_fold"/>
</dbReference>
<dbReference type="InterPro" id="IPR013818">
    <property type="entry name" value="Lipase"/>
</dbReference>
<dbReference type="InterPro" id="IPR002333">
    <property type="entry name" value="Lipase_hep"/>
</dbReference>
<dbReference type="InterPro" id="IPR016272">
    <property type="entry name" value="Lipase_LIPH"/>
</dbReference>
<dbReference type="InterPro" id="IPR033906">
    <property type="entry name" value="Lipase_N"/>
</dbReference>
<dbReference type="InterPro" id="IPR001024">
    <property type="entry name" value="PLAT/LH2_dom"/>
</dbReference>
<dbReference type="InterPro" id="IPR036392">
    <property type="entry name" value="PLAT/LH2_dom_sf"/>
</dbReference>
<dbReference type="InterPro" id="IPR000734">
    <property type="entry name" value="TAG_lipase"/>
</dbReference>
<dbReference type="PANTHER" id="PTHR11610:SF2">
    <property type="entry name" value="HEPATIC TRIACYLGLYCEROL LIPASE"/>
    <property type="match status" value="1"/>
</dbReference>
<dbReference type="PANTHER" id="PTHR11610">
    <property type="entry name" value="LIPASE"/>
    <property type="match status" value="1"/>
</dbReference>
<dbReference type="Pfam" id="PF00151">
    <property type="entry name" value="Lipase"/>
    <property type="match status" value="1"/>
</dbReference>
<dbReference type="Pfam" id="PF01477">
    <property type="entry name" value="PLAT"/>
    <property type="match status" value="1"/>
</dbReference>
<dbReference type="PIRSF" id="PIRSF000865">
    <property type="entry name" value="Lipoprotein_lipase_LIPH"/>
    <property type="match status" value="1"/>
</dbReference>
<dbReference type="PRINTS" id="PR00824">
    <property type="entry name" value="HEPLIPASE"/>
</dbReference>
<dbReference type="PRINTS" id="PR00821">
    <property type="entry name" value="TAGLIPASE"/>
</dbReference>
<dbReference type="SMART" id="SM00308">
    <property type="entry name" value="LH2"/>
    <property type="match status" value="1"/>
</dbReference>
<dbReference type="SUPFAM" id="SSF53474">
    <property type="entry name" value="alpha/beta-Hydrolases"/>
    <property type="match status" value="1"/>
</dbReference>
<dbReference type="SUPFAM" id="SSF49723">
    <property type="entry name" value="Lipase/lipooxygenase domain (PLAT/LH2 domain)"/>
    <property type="match status" value="1"/>
</dbReference>
<dbReference type="PROSITE" id="PS00120">
    <property type="entry name" value="LIPASE_SER"/>
    <property type="match status" value="1"/>
</dbReference>
<dbReference type="PROSITE" id="PS50095">
    <property type="entry name" value="PLAT"/>
    <property type="match status" value="1"/>
</dbReference>